<dbReference type="EC" id="3.2.1.45"/>
<dbReference type="EMBL" id="BX284604">
    <property type="protein sequence ID" value="CCD31056.1"/>
    <property type="molecule type" value="Genomic_DNA"/>
</dbReference>
<dbReference type="EMBL" id="AL031254">
    <property type="protein sequence ID" value="CCD31056.1"/>
    <property type="status" value="JOINED"/>
    <property type="molecule type" value="Genomic_DNA"/>
</dbReference>
<dbReference type="EMBL" id="BX284604">
    <property type="protein sequence ID" value="CAB02924.1"/>
    <property type="molecule type" value="Genomic_DNA"/>
</dbReference>
<dbReference type="EMBL" id="AL031254">
    <property type="protein sequence ID" value="CAB02924.1"/>
    <property type="status" value="JOINED"/>
    <property type="molecule type" value="Genomic_DNA"/>
</dbReference>
<dbReference type="EMBL" id="BX284604">
    <property type="protein sequence ID" value="CAC35813.1"/>
    <property type="molecule type" value="Genomic_DNA"/>
</dbReference>
<dbReference type="EMBL" id="AL031254">
    <property type="protein sequence ID" value="CAC35813.1"/>
    <property type="status" value="JOINED"/>
    <property type="molecule type" value="Genomic_DNA"/>
</dbReference>
<dbReference type="PIR" id="T18583">
    <property type="entry name" value="T18583"/>
</dbReference>
<dbReference type="RefSeq" id="NP_001255965.1">
    <molecule id="G5ECR8-4"/>
    <property type="nucleotide sequence ID" value="NM_001269036.3"/>
</dbReference>
<dbReference type="RefSeq" id="NP_503118.1">
    <molecule id="G5ECR8-2"/>
    <property type="nucleotide sequence ID" value="NM_070717.4"/>
</dbReference>
<dbReference type="RefSeq" id="NP_503119.1">
    <molecule id="G5ECR8-1"/>
    <property type="nucleotide sequence ID" value="NM_070718.4"/>
</dbReference>
<dbReference type="SMR" id="G5ECR8"/>
<dbReference type="BioGRID" id="43610">
    <property type="interactions" value="7"/>
</dbReference>
<dbReference type="FunCoup" id="G5ECR8">
    <property type="interactions" value="543"/>
</dbReference>
<dbReference type="IntAct" id="G5ECR8">
    <property type="interactions" value="1"/>
</dbReference>
<dbReference type="MINT" id="G5ECR8"/>
<dbReference type="STRING" id="6239.F11E6.1d.1"/>
<dbReference type="CAZy" id="GH30">
    <property type="family name" value="Glycoside Hydrolase Family 30"/>
</dbReference>
<dbReference type="PaxDb" id="6239-F11E6.1d"/>
<dbReference type="PeptideAtlas" id="G5ECR8"/>
<dbReference type="EnsemblMetazoa" id="F11E6.1a.1">
    <molecule id="G5ECR8-1"/>
    <property type="protein sequence ID" value="F11E6.1a.1"/>
    <property type="gene ID" value="WBGene00008706"/>
</dbReference>
<dbReference type="EnsemblMetazoa" id="F11E6.1b.1">
    <molecule id="G5ECR8-2"/>
    <property type="protein sequence ID" value="F11E6.1b.1"/>
    <property type="gene ID" value="WBGene00008706"/>
</dbReference>
<dbReference type="EnsemblMetazoa" id="F11E6.1d.1">
    <molecule id="G5ECR8-4"/>
    <property type="protein sequence ID" value="F11E6.1d.1"/>
    <property type="gene ID" value="WBGene00008706"/>
</dbReference>
<dbReference type="GeneID" id="178535"/>
<dbReference type="KEGG" id="cel:CELE_F11E6.1"/>
<dbReference type="UCSC" id="F11E6.1a">
    <property type="organism name" value="c. elegans"/>
</dbReference>
<dbReference type="AGR" id="WB:WBGene00008706"/>
<dbReference type="CTD" id="178535"/>
<dbReference type="WormBase" id="F11E6.1a">
    <molecule id="G5ECR8-1"/>
    <property type="protein sequence ID" value="CE20669"/>
    <property type="gene ID" value="WBGene00008706"/>
    <property type="gene designation" value="gba-3"/>
</dbReference>
<dbReference type="WormBase" id="F11E6.1b">
    <molecule id="G5ECR8-2"/>
    <property type="protein sequence ID" value="CE26698"/>
    <property type="gene ID" value="WBGene00008706"/>
    <property type="gene designation" value="gba-3"/>
</dbReference>
<dbReference type="WormBase" id="F11E6.1d">
    <molecule id="G5ECR8-4"/>
    <property type="protein sequence ID" value="CE46394"/>
    <property type="gene ID" value="WBGene00008706"/>
    <property type="gene designation" value="gba-3"/>
</dbReference>
<dbReference type="eggNOG" id="KOG2566">
    <property type="taxonomic scope" value="Eukaryota"/>
</dbReference>
<dbReference type="GeneTree" id="ENSGT00390000009464"/>
<dbReference type="InParanoid" id="G5ECR8"/>
<dbReference type="OMA" id="PIMGDWF"/>
<dbReference type="OrthoDB" id="2160638at2759"/>
<dbReference type="PhylomeDB" id="G5ECR8"/>
<dbReference type="UniPathway" id="UPA00222"/>
<dbReference type="PRO" id="PR:G5ECR8"/>
<dbReference type="Proteomes" id="UP000001940">
    <property type="component" value="Chromosome IV"/>
</dbReference>
<dbReference type="Bgee" id="WBGene00008706">
    <property type="expression patterns" value="Expressed in larva and 4 other cell types or tissues"/>
</dbReference>
<dbReference type="GO" id="GO:0016020">
    <property type="term" value="C:membrane"/>
    <property type="evidence" value="ECO:0007669"/>
    <property type="project" value="GOC"/>
</dbReference>
<dbReference type="GO" id="GO:0004348">
    <property type="term" value="F:glucosylceramidase activity"/>
    <property type="evidence" value="ECO:0000318"/>
    <property type="project" value="GO_Central"/>
</dbReference>
<dbReference type="GO" id="GO:0006680">
    <property type="term" value="P:glucosylceramide catabolic process"/>
    <property type="evidence" value="ECO:0000318"/>
    <property type="project" value="GO_Central"/>
</dbReference>
<dbReference type="FunFam" id="3.20.20.80:FF:000030">
    <property type="entry name" value="Lysosomal acid glucosylceramidase"/>
    <property type="match status" value="1"/>
</dbReference>
<dbReference type="Gene3D" id="3.20.20.80">
    <property type="entry name" value="Glycosidases"/>
    <property type="match status" value="1"/>
</dbReference>
<dbReference type="InterPro" id="IPR033452">
    <property type="entry name" value="GH30_C"/>
</dbReference>
<dbReference type="InterPro" id="IPR001139">
    <property type="entry name" value="Glyco_hydro_30"/>
</dbReference>
<dbReference type="InterPro" id="IPR033453">
    <property type="entry name" value="Glyco_hydro_30_TIM-barrel"/>
</dbReference>
<dbReference type="InterPro" id="IPR017853">
    <property type="entry name" value="Glycoside_hydrolase_SF"/>
</dbReference>
<dbReference type="PANTHER" id="PTHR11069">
    <property type="entry name" value="GLUCOSYLCERAMIDASE"/>
    <property type="match status" value="1"/>
</dbReference>
<dbReference type="PANTHER" id="PTHR11069:SF23">
    <property type="entry name" value="LYSOSOMAL ACID GLUCOSYLCERAMIDASE"/>
    <property type="match status" value="1"/>
</dbReference>
<dbReference type="Pfam" id="PF02055">
    <property type="entry name" value="Glyco_hydro_30"/>
    <property type="match status" value="1"/>
</dbReference>
<dbReference type="Pfam" id="PF17189">
    <property type="entry name" value="Glyco_hydro_30C"/>
    <property type="match status" value="1"/>
</dbReference>
<dbReference type="PRINTS" id="PR00843">
    <property type="entry name" value="GLHYDRLASE30"/>
</dbReference>
<dbReference type="SUPFAM" id="SSF51445">
    <property type="entry name" value="(Trans)glycosidases"/>
    <property type="match status" value="1"/>
</dbReference>
<dbReference type="SUPFAM" id="SSF51011">
    <property type="entry name" value="Glycosyl hydrolase domain"/>
    <property type="match status" value="1"/>
</dbReference>
<protein>
    <recommendedName>
        <fullName>Putative glucosylceramidase 3</fullName>
        <ecNumber>3.2.1.45</ecNumber>
    </recommendedName>
</protein>
<organism>
    <name type="scientific">Caenorhabditis elegans</name>
    <dbReference type="NCBI Taxonomy" id="6239"/>
    <lineage>
        <taxon>Eukaryota</taxon>
        <taxon>Metazoa</taxon>
        <taxon>Ecdysozoa</taxon>
        <taxon>Nematoda</taxon>
        <taxon>Chromadorea</taxon>
        <taxon>Rhabditida</taxon>
        <taxon>Rhabditina</taxon>
        <taxon>Rhabditomorpha</taxon>
        <taxon>Rhabditoidea</taxon>
        <taxon>Rhabditidae</taxon>
        <taxon>Peloderinae</taxon>
        <taxon>Caenorhabditis</taxon>
    </lineage>
</organism>
<name>GLCM3_CAEEL</name>
<comment type="function">
    <text evidence="2 4">Glucosylceramidase that catalyzes the hydrolysis of glucosylceramides into free ceramides and glucose (By similarity). C.elegans contain specific sphingoid bases, which are unique or different in structure compared to the sphingoid bases found in other animals. Two examples of these distinctive compounds are: 15-methylhexadecasphinganine and 15-methylhexadecasphing-4-enine (PubMed:30155209).</text>
</comment>
<comment type="catalytic activity">
    <reaction evidence="5">
        <text>a beta-D-glucosylceramide + H2O = an N-acyl-sphingoid base + D-glucose</text>
        <dbReference type="Rhea" id="RHEA:81447"/>
        <dbReference type="ChEBI" id="CHEBI:4167"/>
        <dbReference type="ChEBI" id="CHEBI:15377"/>
        <dbReference type="ChEBI" id="CHEBI:83264"/>
        <dbReference type="ChEBI" id="CHEBI:83273"/>
    </reaction>
    <physiologicalReaction direction="left-to-right" evidence="5">
        <dbReference type="Rhea" id="RHEA:81448"/>
    </physiologicalReaction>
</comment>
<comment type="catalytic activity">
    <reaction evidence="2">
        <text>a beta-D-glucosyl-(1&lt;-&gt;1')-N-acylsphing-4-enine + H2O = an N-acylsphing-4-enine + D-glucose</text>
        <dbReference type="Rhea" id="RHEA:13269"/>
        <dbReference type="ChEBI" id="CHEBI:4167"/>
        <dbReference type="ChEBI" id="CHEBI:15377"/>
        <dbReference type="ChEBI" id="CHEBI:22801"/>
        <dbReference type="ChEBI" id="CHEBI:52639"/>
        <dbReference type="EC" id="3.2.1.45"/>
    </reaction>
    <physiologicalReaction direction="left-to-right" evidence="5">
        <dbReference type="Rhea" id="RHEA:13270"/>
    </physiologicalReaction>
</comment>
<comment type="catalytic activity">
    <reaction evidence="5">
        <text>an N-acyl-1-beta-D-glucosyl-15-methylhexadecasphing-4-enine + H2O = an N-acyl-15-methylhexadecasphing-4-enine + D-glucose</text>
        <dbReference type="Rhea" id="RHEA:34755"/>
        <dbReference type="ChEBI" id="CHEBI:4167"/>
        <dbReference type="ChEBI" id="CHEBI:15377"/>
        <dbReference type="ChEBI" id="CHEBI:70815"/>
        <dbReference type="ChEBI" id="CHEBI:70846"/>
    </reaction>
    <physiologicalReaction direction="left-to-right" evidence="5">
        <dbReference type="Rhea" id="RHEA:34756"/>
    </physiologicalReaction>
</comment>
<comment type="pathway">
    <text>Lipid metabolism; sphingolipid metabolism.</text>
</comment>
<comment type="alternative products">
    <event type="alternative splicing"/>
    <isoform>
        <id>G5ECR8-1</id>
        <name evidence="6">a</name>
        <sequence type="displayed"/>
    </isoform>
    <isoform>
        <id>G5ECR8-2</id>
        <name evidence="7">b</name>
        <sequence type="described" ref="VSP_045726 VSP_045727 VSP_045728 VSP_045729 VSP_045730 VSP_045731 VSP_045732 VSP_045733 VSP_045734 VSP_045735 VSP_045736"/>
    </isoform>
    <isoform>
        <id>G5ECR8-4</id>
        <name evidence="8">d</name>
        <sequence type="described" ref="VSP_045725"/>
    </isoform>
</comment>
<comment type="similarity">
    <text evidence="5">Belongs to the glycosyl hydrolase 30 family.</text>
</comment>
<feature type="signal peptide" evidence="3">
    <location>
        <begin position="1"/>
        <end position="21"/>
    </location>
</feature>
<feature type="chain" id="PRO_0000421455" description="Putative glucosylceramidase 3">
    <location>
        <begin position="22"/>
        <end position="522"/>
    </location>
</feature>
<feature type="active site" description="Proton donor" evidence="1">
    <location>
        <position position="259"/>
    </location>
</feature>
<feature type="active site" description="Nucleophile" evidence="1">
    <location>
        <position position="364"/>
    </location>
</feature>
<feature type="splice variant" id="VSP_045725" description="In isoform d." evidence="5">
    <original>MSRWKVVILCLLSFMFEI</original>
    <variation>MAFFSVRSSKIVFGLERSEEK</variation>
    <location>
        <begin position="1"/>
        <end position="18"/>
    </location>
</feature>
<feature type="splice variant" id="VSP_045726" description="In isoform b." evidence="5">
    <original>FG</original>
    <variation>AI</variation>
    <location>
        <begin position="370"/>
        <end position="371"/>
    </location>
</feature>
<feature type="splice variant" id="VSP_045727" description="In isoform b." evidence="5">
    <original>I</original>
    <variation>L</variation>
    <location>
        <position position="376"/>
    </location>
</feature>
<feature type="splice variant" id="VSP_045728" description="In isoform b." evidence="5">
    <original>R</original>
    <variation>T</variation>
    <location>
        <position position="382"/>
    </location>
</feature>
<feature type="splice variant" id="VSP_045729" description="In isoform b." evidence="5">
    <original>S</original>
    <variation>N</variation>
    <location>
        <position position="385"/>
    </location>
</feature>
<feature type="splice variant" id="VSP_045730" description="In isoform b." evidence="5">
    <original>D</original>
    <variation>S</variation>
    <location>
        <position position="388"/>
    </location>
</feature>
<feature type="splice variant" id="VSP_045731" description="In isoform b." evidence="5">
    <original>T</original>
    <variation>S</variation>
    <location>
        <position position="392"/>
    </location>
</feature>
<feature type="splice variant" id="VSP_045732" description="In isoform b." evidence="5">
    <original>V</original>
    <variation>F</variation>
    <location>
        <position position="398"/>
    </location>
</feature>
<feature type="splice variant" id="VSP_045733" description="In isoform b." evidence="5">
    <original>ET</original>
    <variation>DM</variation>
    <location>
        <begin position="410"/>
        <end position="411"/>
    </location>
</feature>
<feature type="splice variant" id="VSP_045734" description="In isoform b." evidence="5">
    <original>NWAYNV</original>
    <variation>TWVDNF</variation>
    <location>
        <begin position="415"/>
        <end position="420"/>
    </location>
</feature>
<feature type="splice variant" id="VSP_045735" description="In isoform b." evidence="5">
    <original>A</original>
    <variation>G</variation>
    <location>
        <position position="431"/>
    </location>
</feature>
<feature type="splice variant" id="VSP_045736" description="In isoform b." evidence="5">
    <original>L</original>
    <variation>M</variation>
    <location>
        <position position="443"/>
    </location>
</feature>
<keyword id="KW-0025">Alternative splicing</keyword>
<keyword id="KW-0378">Hydrolase</keyword>
<keyword id="KW-0443">Lipid metabolism</keyword>
<keyword id="KW-1185">Reference proteome</keyword>
<keyword id="KW-0732">Signal</keyword>
<keyword id="KW-0746">Sphingolipid metabolism</keyword>
<sequence>MSRWKVVILCLLSFMFEIGHASFQCNPKTYDGAFLNIVCVCNATFCDEIEPIGEIAEGKAIVYRSSLDGDRLKRMSMKMKEKLRKNESVNVTITIDASERFQNIFGFGGAFTDSAGDQFVSLSETLQNYIVDSYFGKNGLEYNIGRVPIASCDFSTHEYSYDDVHDDFELKHFALPDEDLKLKIPFIKKAIEKTEGNIQLFASPWSAPGWMKVTGRMRGGGAMRNDKRVYQAYADYFFKFFEAYSSHAITFWGLTIQNEPSTGADMAWRWQTMNYTAETMRDFLKKYLGPKLKENKLTETLKVMVLDDGRGLLPGWADTIFNDPEATKYADGVAVHWYGNLYSPAVLLDITQRHHPTKFIFGTEACAGYFGHHGPIMGDWFRAESYADDIITDLNHHVTGWTDWNLCLDETGGPNWAYNVVDSPIIVNRTAQEFYKQPMFYALGHFSKFLPRGSTRVFTKIEGNLAVSATSVVIEGGRRATVILSKASNSLLTRIVDSSTGFSIVLNLPPRSIHTVIWKKRK</sequence>
<reference key="1">
    <citation type="journal article" date="1998" name="Science">
        <title>Genome sequence of the nematode C. elegans: a platform for investigating biology.</title>
        <authorList>
            <consortium name="The C. elegans sequencing consortium"/>
        </authorList>
    </citation>
    <scope>NUCLEOTIDE SEQUENCE [LARGE SCALE GENOMIC DNA]</scope>
    <source>
        <strain>Bristol N2</strain>
    </source>
</reference>
<reference key="2">
    <citation type="journal article" date="2017" name="Chem. Sci.">
        <title>Structure and conserved function of iso-branched sphingoid bases from the nematode Caenorhabditis elegans.</title>
        <authorList>
            <person name="Hannich J.T."/>
            <person name="Mellal D."/>
            <person name="Feng S."/>
            <person name="Zumbuehl A."/>
            <person name="Riezman H."/>
        </authorList>
    </citation>
    <scope>FUNCTION</scope>
</reference>
<gene>
    <name evidence="6" type="primary">gba-3</name>
    <name evidence="6" type="ORF">F11E6.1</name>
</gene>
<evidence type="ECO:0000250" key="1"/>
<evidence type="ECO:0000250" key="2">
    <source>
        <dbReference type="UniProtKB" id="P17439"/>
    </source>
</evidence>
<evidence type="ECO:0000255" key="3"/>
<evidence type="ECO:0000269" key="4">
    <source>
    </source>
</evidence>
<evidence type="ECO:0000305" key="5"/>
<evidence type="ECO:0000312" key="6">
    <source>
        <dbReference type="WormBase" id="F11E6.1a"/>
    </source>
</evidence>
<evidence type="ECO:0000312" key="7">
    <source>
        <dbReference type="WormBase" id="F11E6.1b"/>
    </source>
</evidence>
<evidence type="ECO:0000312" key="8">
    <source>
        <dbReference type="WormBase" id="F11E6.1d"/>
    </source>
</evidence>
<proteinExistence type="inferred from homology"/>
<accession>G5ECR8</accession>
<accession>G5EEA6</accession>
<accession>G5EFK0</accession>
<accession>Q8MQ76</accession>